<name>UXUA_STRSY</name>
<organism>
    <name type="scientific">Streptococcus suis (strain 05ZYH33)</name>
    <dbReference type="NCBI Taxonomy" id="391295"/>
    <lineage>
        <taxon>Bacteria</taxon>
        <taxon>Bacillati</taxon>
        <taxon>Bacillota</taxon>
        <taxon>Bacilli</taxon>
        <taxon>Lactobacillales</taxon>
        <taxon>Streptococcaceae</taxon>
        <taxon>Streptococcus</taxon>
    </lineage>
</organism>
<comment type="function">
    <text evidence="1">Catalyzes the dehydration of D-mannonate.</text>
</comment>
<comment type="catalytic activity">
    <reaction evidence="1">
        <text>D-mannonate = 2-dehydro-3-deoxy-D-gluconate + H2O</text>
        <dbReference type="Rhea" id="RHEA:20097"/>
        <dbReference type="ChEBI" id="CHEBI:15377"/>
        <dbReference type="ChEBI" id="CHEBI:17767"/>
        <dbReference type="ChEBI" id="CHEBI:57990"/>
        <dbReference type="EC" id="4.2.1.8"/>
    </reaction>
</comment>
<comment type="cofactor">
    <cofactor evidence="1">
        <name>Fe(2+)</name>
        <dbReference type="ChEBI" id="CHEBI:29033"/>
    </cofactor>
    <cofactor evidence="1">
        <name>Mn(2+)</name>
        <dbReference type="ChEBI" id="CHEBI:29035"/>
    </cofactor>
</comment>
<comment type="pathway">
    <text evidence="1">Carbohydrate metabolism; pentose and glucuronate interconversion.</text>
</comment>
<comment type="similarity">
    <text evidence="1">Belongs to the mannonate dehydratase family.</text>
</comment>
<feature type="chain" id="PRO_1000034339" description="Mannonate dehydratase">
    <location>
        <begin position="1"/>
        <end position="366"/>
    </location>
</feature>
<feature type="strand" evidence="2">
    <location>
        <begin position="4"/>
        <end position="6"/>
    </location>
</feature>
<feature type="helix" evidence="3">
    <location>
        <begin position="16"/>
        <end position="20"/>
    </location>
</feature>
<feature type="strand" evidence="3">
    <location>
        <begin position="27"/>
        <end position="30"/>
    </location>
</feature>
<feature type="strand" evidence="3">
    <location>
        <begin position="37"/>
        <end position="39"/>
    </location>
</feature>
<feature type="helix" evidence="3">
    <location>
        <begin position="43"/>
        <end position="54"/>
    </location>
</feature>
<feature type="turn" evidence="3">
    <location>
        <begin position="55"/>
        <end position="57"/>
    </location>
</feature>
<feature type="strand" evidence="3">
    <location>
        <begin position="59"/>
        <end position="64"/>
    </location>
</feature>
<feature type="helix" evidence="3">
    <location>
        <begin position="70"/>
        <end position="73"/>
    </location>
</feature>
<feature type="helix" evidence="3">
    <location>
        <begin position="79"/>
        <end position="94"/>
    </location>
</feature>
<feature type="turn" evidence="3">
    <location>
        <begin position="95"/>
        <end position="97"/>
    </location>
</feature>
<feature type="strand" evidence="3">
    <location>
        <begin position="100"/>
        <end position="103"/>
    </location>
</feature>
<feature type="strand" evidence="3">
    <location>
        <begin position="114"/>
        <end position="119"/>
    </location>
</feature>
<feature type="strand" evidence="3">
    <location>
        <begin position="125"/>
        <end position="130"/>
    </location>
</feature>
<feature type="helix" evidence="3">
    <location>
        <begin position="131"/>
        <end position="134"/>
    </location>
</feature>
<feature type="helix" evidence="3">
    <location>
        <begin position="156"/>
        <end position="167"/>
    </location>
</feature>
<feature type="helix" evidence="3">
    <location>
        <begin position="171"/>
        <end position="190"/>
    </location>
</feature>
<feature type="strand" evidence="3">
    <location>
        <begin position="191"/>
        <end position="193"/>
    </location>
</feature>
<feature type="strand" evidence="3">
    <location>
        <begin position="195"/>
        <end position="198"/>
    </location>
</feature>
<feature type="strand" evidence="3">
    <location>
        <begin position="202"/>
        <end position="205"/>
    </location>
</feature>
<feature type="helix" evidence="3">
    <location>
        <begin position="217"/>
        <end position="225"/>
    </location>
</feature>
<feature type="strand" evidence="3">
    <location>
        <begin position="232"/>
        <end position="237"/>
    </location>
</feature>
<feature type="helix" evidence="3">
    <location>
        <begin position="238"/>
        <end position="242"/>
    </location>
</feature>
<feature type="helix" evidence="3">
    <location>
        <begin position="249"/>
        <end position="258"/>
    </location>
</feature>
<feature type="strand" evidence="3">
    <location>
        <begin position="262"/>
        <end position="266"/>
    </location>
</feature>
<feature type="strand" evidence="3">
    <location>
        <begin position="270"/>
        <end position="273"/>
    </location>
</feature>
<feature type="strand" evidence="3">
    <location>
        <begin position="276"/>
        <end position="279"/>
    </location>
</feature>
<feature type="helix" evidence="3">
    <location>
        <begin position="284"/>
        <end position="286"/>
    </location>
</feature>
<feature type="strand" evidence="2">
    <location>
        <begin position="287"/>
        <end position="289"/>
    </location>
</feature>
<feature type="helix" evidence="3">
    <location>
        <begin position="291"/>
        <end position="300"/>
    </location>
</feature>
<feature type="strand" evidence="4">
    <location>
        <begin position="305"/>
        <end position="308"/>
    </location>
</feature>
<feature type="helix" evidence="3">
    <location>
        <begin position="328"/>
        <end position="348"/>
    </location>
</feature>
<proteinExistence type="evidence at protein level"/>
<protein>
    <recommendedName>
        <fullName evidence="1">Mannonate dehydratase</fullName>
        <ecNumber evidence="1">4.2.1.8</ecNumber>
    </recommendedName>
    <alternativeName>
        <fullName evidence="1">D-mannonate hydro-lyase</fullName>
    </alternativeName>
</protein>
<accession>A4VVI4</accession>
<sequence length="366" mass="40808">MKMSFRWYGKKDPVTLEEIKAIPGMQGIVTAVYDVPVGQAWPLENILELKKMVEEAGLEITVIESIPVHEDIKQGKPNRDALIENYKTSIRNVGAAGIPVVCYNFMPVFDWTRSDLHHPLPDGSTSLAFLKSDLAGVDPVADDLNLPGWDSSYSKEEMKAIIENYRQNISEEDLWANLEYFIKAILPTAEEAGVKMAIHPDDPPYGIFGLPRIITGQEAVERFLNLYDSEHNGITMCVGSYASDPKNDVLAMTEYALKRNRINFMHTRNVTAGAWGFQETAHLSQAGDIDMNAVVKLLVDYDWQGSLRPDHGRRIWGDQTKTPGYGLYDRALGATYFNGLYEANMRAAGKTPDFGIKAKTVGTKEG</sequence>
<keyword id="KW-0002">3D-structure</keyword>
<keyword id="KW-0408">Iron</keyword>
<keyword id="KW-0456">Lyase</keyword>
<keyword id="KW-0464">Manganese</keyword>
<dbReference type="EC" id="4.2.1.8" evidence="1"/>
<dbReference type="EMBL" id="CP000407">
    <property type="protein sequence ID" value="ABP90123.1"/>
    <property type="molecule type" value="Genomic_DNA"/>
</dbReference>
<dbReference type="PDB" id="3BAN">
    <property type="method" value="X-ray"/>
    <property type="resolution" value="2.90 A"/>
    <property type="chains" value="A/B=1-366"/>
</dbReference>
<dbReference type="PDB" id="3BDK">
    <property type="method" value="X-ray"/>
    <property type="resolution" value="2.50 A"/>
    <property type="chains" value="A/B=1-366"/>
</dbReference>
<dbReference type="PDB" id="3DBN">
    <property type="method" value="X-ray"/>
    <property type="resolution" value="2.90 A"/>
    <property type="chains" value="A/B=1-366"/>
</dbReference>
<dbReference type="PDB" id="3FVM">
    <property type="method" value="X-ray"/>
    <property type="resolution" value="2.90 A"/>
    <property type="chains" value="A/B=1-366"/>
</dbReference>
<dbReference type="PDBsum" id="3BAN"/>
<dbReference type="PDBsum" id="3BDK"/>
<dbReference type="PDBsum" id="3DBN"/>
<dbReference type="PDBsum" id="3FVM"/>
<dbReference type="SMR" id="A4VVI4"/>
<dbReference type="STRING" id="391295.SSU05_1157"/>
<dbReference type="KEGG" id="ssu:SSU05_1157"/>
<dbReference type="eggNOG" id="COG1312">
    <property type="taxonomic scope" value="Bacteria"/>
</dbReference>
<dbReference type="HOGENOM" id="CLU_058621_1_0_9"/>
<dbReference type="BRENDA" id="4.2.1.8">
    <property type="organism ID" value="7186"/>
</dbReference>
<dbReference type="UniPathway" id="UPA00246"/>
<dbReference type="EvolutionaryTrace" id="A4VVI4"/>
<dbReference type="GO" id="GO:0008198">
    <property type="term" value="F:ferrous iron binding"/>
    <property type="evidence" value="ECO:0007669"/>
    <property type="project" value="TreeGrafter"/>
</dbReference>
<dbReference type="GO" id="GO:0030145">
    <property type="term" value="F:manganese ion binding"/>
    <property type="evidence" value="ECO:0007669"/>
    <property type="project" value="TreeGrafter"/>
</dbReference>
<dbReference type="GO" id="GO:0008927">
    <property type="term" value="F:mannonate dehydratase activity"/>
    <property type="evidence" value="ECO:0007669"/>
    <property type="project" value="UniProtKB-UniRule"/>
</dbReference>
<dbReference type="GO" id="GO:0042840">
    <property type="term" value="P:D-glucuronate catabolic process"/>
    <property type="evidence" value="ECO:0007669"/>
    <property type="project" value="TreeGrafter"/>
</dbReference>
<dbReference type="FunFam" id="3.20.20.150:FF:000010">
    <property type="entry name" value="Mannonate dehydratase"/>
    <property type="match status" value="1"/>
</dbReference>
<dbReference type="Gene3D" id="3.20.20.150">
    <property type="entry name" value="Divalent-metal-dependent TIM barrel enzymes"/>
    <property type="match status" value="1"/>
</dbReference>
<dbReference type="HAMAP" id="MF_00106">
    <property type="entry name" value="UxuA"/>
    <property type="match status" value="1"/>
</dbReference>
<dbReference type="InterPro" id="IPR004628">
    <property type="entry name" value="Man_deHydtase"/>
</dbReference>
<dbReference type="InterPro" id="IPR036237">
    <property type="entry name" value="Xyl_isomerase-like_sf"/>
</dbReference>
<dbReference type="NCBIfam" id="NF003027">
    <property type="entry name" value="PRK03906.1"/>
    <property type="match status" value="2"/>
</dbReference>
<dbReference type="PANTHER" id="PTHR30387">
    <property type="entry name" value="MANNONATE DEHYDRATASE"/>
    <property type="match status" value="1"/>
</dbReference>
<dbReference type="PANTHER" id="PTHR30387:SF2">
    <property type="entry name" value="MANNONATE DEHYDRATASE"/>
    <property type="match status" value="1"/>
</dbReference>
<dbReference type="Pfam" id="PF03786">
    <property type="entry name" value="UxuA"/>
    <property type="match status" value="1"/>
</dbReference>
<dbReference type="PIRSF" id="PIRSF016049">
    <property type="entry name" value="Man_dehyd"/>
    <property type="match status" value="1"/>
</dbReference>
<dbReference type="SUPFAM" id="SSF51658">
    <property type="entry name" value="Xylose isomerase-like"/>
    <property type="match status" value="1"/>
</dbReference>
<reference key="1">
    <citation type="journal article" date="2007" name="PLoS ONE">
        <title>A glimpse of streptococcal toxic shock syndrome from comparative genomics of S. suis 2 Chinese isolates.</title>
        <authorList>
            <person name="Chen C."/>
            <person name="Tang J."/>
            <person name="Dong W."/>
            <person name="Wang C."/>
            <person name="Feng Y."/>
            <person name="Wang J."/>
            <person name="Zheng F."/>
            <person name="Pan X."/>
            <person name="Liu D."/>
            <person name="Li M."/>
            <person name="Song Y."/>
            <person name="Zhu X."/>
            <person name="Sun H."/>
            <person name="Feng T."/>
            <person name="Guo Z."/>
            <person name="Ju A."/>
            <person name="Ge J."/>
            <person name="Dong Y."/>
            <person name="Sun W."/>
            <person name="Jiang Y."/>
            <person name="Wang J."/>
            <person name="Yan J."/>
            <person name="Yang H."/>
            <person name="Wang X."/>
            <person name="Gao G.F."/>
            <person name="Yang R."/>
            <person name="Wang J."/>
            <person name="Yu J."/>
        </authorList>
    </citation>
    <scope>NUCLEOTIDE SEQUENCE [LARGE SCALE GENOMIC DNA]</scope>
    <source>
        <strain>05ZYH33</strain>
    </source>
</reference>
<gene>
    <name evidence="1" type="primary">uxuA</name>
    <name type="ordered locus">SSU05_1157</name>
</gene>
<evidence type="ECO:0000255" key="1">
    <source>
        <dbReference type="HAMAP-Rule" id="MF_00106"/>
    </source>
</evidence>
<evidence type="ECO:0007829" key="2">
    <source>
        <dbReference type="PDB" id="3BAN"/>
    </source>
</evidence>
<evidence type="ECO:0007829" key="3">
    <source>
        <dbReference type="PDB" id="3BDK"/>
    </source>
</evidence>
<evidence type="ECO:0007829" key="4">
    <source>
        <dbReference type="PDB" id="3DBN"/>
    </source>
</evidence>